<evidence type="ECO:0000250" key="1">
    <source>
        <dbReference type="UniProtKB" id="P61095"/>
    </source>
</evidence>
<evidence type="ECO:0000303" key="2">
    <source>
    </source>
</evidence>
<evidence type="ECO:0000305" key="3"/>
<evidence type="ECO:0000305" key="4">
    <source>
    </source>
</evidence>
<dbReference type="SMR" id="P61097"/>
<dbReference type="ArachnoServer" id="AS000118">
    <property type="toxin name" value="mu-segestritoxin-Sf1c"/>
</dbReference>
<dbReference type="GO" id="GO:0005576">
    <property type="term" value="C:extracellular region"/>
    <property type="evidence" value="ECO:0007669"/>
    <property type="project" value="UniProtKB-SubCell"/>
</dbReference>
<dbReference type="GO" id="GO:0090729">
    <property type="term" value="F:toxin activity"/>
    <property type="evidence" value="ECO:0007669"/>
    <property type="project" value="UniProtKB-KW"/>
</dbReference>
<dbReference type="Gene3D" id="4.10.40.60">
    <property type="match status" value="1"/>
</dbReference>
<dbReference type="InterPro" id="IPR053718">
    <property type="entry name" value="Insecticidal_knottin-like_sf"/>
</dbReference>
<dbReference type="InterPro" id="IPR012633">
    <property type="entry name" value="Toxin_28"/>
</dbReference>
<dbReference type="Pfam" id="PF08115">
    <property type="entry name" value="Toxin_28"/>
    <property type="match status" value="1"/>
</dbReference>
<protein>
    <recommendedName>
        <fullName evidence="3">Mu-segestritoxin-Sf1c</fullName>
        <shortName evidence="3">Mu-SGTX-Sf1c</shortName>
    </recommendedName>
    <alternativeName>
        <fullName evidence="2">Toxin SFI3</fullName>
    </alternativeName>
</protein>
<organism>
    <name type="scientific">Segestria florentina</name>
    <name type="common">Tube-web spider</name>
    <name type="synonym">Segestria gracilis</name>
    <dbReference type="NCBI Taxonomy" id="31925"/>
    <lineage>
        <taxon>Eukaryota</taxon>
        <taxon>Metazoa</taxon>
        <taxon>Ecdysozoa</taxon>
        <taxon>Arthropoda</taxon>
        <taxon>Chelicerata</taxon>
        <taxon>Arachnida</taxon>
        <taxon>Araneae</taxon>
        <taxon>Araneomorphae</taxon>
        <taxon>Haplogynae</taxon>
        <taxon>Dysderoidea</taxon>
        <taxon>Segestriidae</taxon>
        <taxon>Segestria</taxon>
    </lineage>
</organism>
<keyword id="KW-1015">Disulfide bond</keyword>
<keyword id="KW-0960">Knottin</keyword>
<keyword id="KW-0964">Secreted</keyword>
<keyword id="KW-0800">Toxin</keyword>
<name>SFI3_SEGFL</name>
<reference key="1">
    <citation type="journal article" date="2002" name="Toxicon">
        <title>Novel insecticidal toxins from the venom of the spider Segestria florentina.</title>
        <authorList>
            <person name="Lipkin A."/>
            <person name="Kozlov S."/>
            <person name="Nosyreva E."/>
            <person name="Blake A."/>
            <person name="Windass J.D."/>
            <person name="Grishin E."/>
        </authorList>
    </citation>
    <scope>NUCLEOTIDE SEQUENCE [MRNA]</scope>
    <source>
        <tissue>Venom gland</tissue>
    </source>
</reference>
<feature type="chain" id="PRO_0000087618" description="Mu-segestritoxin-Sf1c" evidence="4">
    <location>
        <begin position="1"/>
        <end position="46"/>
    </location>
</feature>
<feature type="region of interest" description="Keys region for toxin activity" evidence="1">
    <location>
        <begin position="31"/>
        <end position="33"/>
    </location>
</feature>
<feature type="disulfide bond" evidence="1">
    <location>
        <begin position="3"/>
        <end position="19"/>
    </location>
</feature>
<feature type="disulfide bond" evidence="1">
    <location>
        <begin position="10"/>
        <end position="22"/>
    </location>
</feature>
<feature type="disulfide bond" evidence="1">
    <location>
        <begin position="18"/>
        <end position="42"/>
    </location>
</feature>
<feature type="disulfide bond" evidence="1">
    <location>
        <begin position="24"/>
        <end position="40"/>
    </location>
</feature>
<accession>P61097</accession>
<comment type="function">
    <text evidence="1">Insecticidal toxin. It inhibits insect voltage-gated sodium channels (Nav) by partially blocking the channel pore in DUM neurons from the American cockroach, not by acting as a gating modifier. The inhibition is only partially reversible after prolonged washout. In vivo, the toxin causes flaccid paralysis followed by death when injected into Heliothis virescens larvae. It also causes uncoordinated movements followed by full paralysis to sheep blowflies (Lucilia cuprina). When the toxin is fused to snowdrop lectin, it is orally active against larvae of the tomato moth (Laconobia oleracea), the rice brown planthopper (Nilaparvata lugens), and the peach-potato aphid (Myzus persicae).</text>
</comment>
<comment type="subcellular location">
    <subcellularLocation>
        <location evidence="1">Secreted</location>
    </subcellularLocation>
</comment>
<comment type="tissue specificity">
    <text evidence="4">Expressed by the venom gland.</text>
</comment>
<comment type="domain">
    <text evidence="1">The presence of a 'disulfide through disulfide knot' structurally defines this protein as a knottin.</text>
</comment>
<comment type="similarity">
    <text evidence="3">Belongs to the neurotoxin 16 (SFI) family.</text>
</comment>
<proteinExistence type="inferred from homology"/>
<sequence>KECMVDGTVCYIHNHNDCCGSCLCLNGPIARPWEMMVGNCKCGPKA</sequence>